<comment type="function">
    <text evidence="1">Removes the N-terminal methionine from nascent proteins. The N-terminal methionine is often cleaved when the second residue in the primary sequence is small and uncharged (Met-Ala-, Cys, Gly, Pro, Ser, Thr, or Val). Requires deformylation of the N(alpha)-formylated initiator methionine before it can be hydrolyzed.</text>
</comment>
<comment type="catalytic activity">
    <reaction evidence="1">
        <text>Release of N-terminal amino acids, preferentially methionine, from peptides and arylamides.</text>
        <dbReference type="EC" id="3.4.11.18"/>
    </reaction>
</comment>
<comment type="cofactor">
    <cofactor evidence="1">
        <name>Co(2+)</name>
        <dbReference type="ChEBI" id="CHEBI:48828"/>
    </cofactor>
    <cofactor evidence="1">
        <name>Zn(2+)</name>
        <dbReference type="ChEBI" id="CHEBI:29105"/>
    </cofactor>
    <cofactor evidence="1">
        <name>Mn(2+)</name>
        <dbReference type="ChEBI" id="CHEBI:29035"/>
    </cofactor>
    <cofactor evidence="1">
        <name>Fe(2+)</name>
        <dbReference type="ChEBI" id="CHEBI:29033"/>
    </cofactor>
    <text evidence="1">Binds 2 divalent metal cations per subunit. Has a high-affinity and a low affinity metal-binding site. The true nature of the physiological cofactor is under debate. The enzyme is active with cobalt, zinc, manganese or divalent iron ions. Most likely, methionine aminopeptidases function as mononuclear Fe(2+)-metalloproteases under physiological conditions, and the catalytically relevant metal-binding site has been assigned to the histidine-containing high-affinity site.</text>
</comment>
<comment type="subunit">
    <text evidence="1">Monomer.</text>
</comment>
<comment type="similarity">
    <text evidence="1">Belongs to the peptidase M24A family. Methionine aminopeptidase type 1 subfamily.</text>
</comment>
<comment type="sequence caution" evidence="2">
    <conflict type="erroneous initiation">
        <sequence resource="EMBL-CDS" id="AAF39111"/>
    </conflict>
</comment>
<proteinExistence type="inferred from homology"/>
<gene>
    <name evidence="1" type="primary">map</name>
    <name type="ordered locus">TC_0240</name>
</gene>
<evidence type="ECO:0000255" key="1">
    <source>
        <dbReference type="HAMAP-Rule" id="MF_01974"/>
    </source>
</evidence>
<evidence type="ECO:0000305" key="2"/>
<feature type="chain" id="PRO_0000148932" description="Methionine aminopeptidase">
    <location>
        <begin position="1"/>
        <end position="291"/>
    </location>
</feature>
<feature type="binding site" evidence="1">
    <location>
        <position position="118"/>
    </location>
    <ligand>
        <name>substrate</name>
    </ligand>
</feature>
<feature type="binding site" evidence="1">
    <location>
        <position position="135"/>
    </location>
    <ligand>
        <name>a divalent metal cation</name>
        <dbReference type="ChEBI" id="CHEBI:60240"/>
        <label>1</label>
    </ligand>
</feature>
<feature type="binding site" evidence="1">
    <location>
        <position position="146"/>
    </location>
    <ligand>
        <name>a divalent metal cation</name>
        <dbReference type="ChEBI" id="CHEBI:60240"/>
        <label>1</label>
    </ligand>
</feature>
<feature type="binding site" evidence="1">
    <location>
        <position position="146"/>
    </location>
    <ligand>
        <name>a divalent metal cation</name>
        <dbReference type="ChEBI" id="CHEBI:60240"/>
        <label>2</label>
        <note>catalytic</note>
    </ligand>
</feature>
<feature type="binding site" evidence="1">
    <location>
        <position position="209"/>
    </location>
    <ligand>
        <name>a divalent metal cation</name>
        <dbReference type="ChEBI" id="CHEBI:60240"/>
        <label>2</label>
        <note>catalytic</note>
    </ligand>
</feature>
<feature type="binding site" evidence="1">
    <location>
        <position position="216"/>
    </location>
    <ligand>
        <name>substrate</name>
    </ligand>
</feature>
<feature type="binding site" evidence="1">
    <location>
        <position position="241"/>
    </location>
    <ligand>
        <name>a divalent metal cation</name>
        <dbReference type="ChEBI" id="CHEBI:60240"/>
        <label>2</label>
        <note>catalytic</note>
    </ligand>
</feature>
<feature type="binding site" evidence="1">
    <location>
        <position position="273"/>
    </location>
    <ligand>
        <name>a divalent metal cation</name>
        <dbReference type="ChEBI" id="CHEBI:60240"/>
        <label>1</label>
    </ligand>
</feature>
<feature type="binding site" evidence="1">
    <location>
        <position position="273"/>
    </location>
    <ligand>
        <name>a divalent metal cation</name>
        <dbReference type="ChEBI" id="CHEBI:60240"/>
        <label>2</label>
        <note>catalytic</note>
    </ligand>
</feature>
<sequence length="291" mass="32646">MKRNDPCWCGSQKKWKHCHYPTKPERPSDNLRQLYASRYDIIIKTPDQIEKIRKACQVTARILDALCKAAKEGVTTNELDQLSCNLHKQYNAIPAPLNYGQPPFPKTICTSLNEVICHGIPNDTPLQNGDIMNIDVSCIVDGFYGDCSRMVMIGEVPEIKKKVCEASLEALNAAIAILEPNLPLYEIGEVIENCAARYGFSVVDQFVGHGVGVRFHENPYVAHHRNSCKIPLAPGMTFTIEPMINVGKKEGFIDPTNHWEARTCDHQPSAQWEHTVLITDSGYEILTLLDN</sequence>
<dbReference type="EC" id="3.4.11.18" evidence="1"/>
<dbReference type="EMBL" id="AE002160">
    <property type="protein sequence ID" value="AAF39111.1"/>
    <property type="status" value="ALT_INIT"/>
    <property type="molecule type" value="Genomic_DNA"/>
</dbReference>
<dbReference type="PIR" id="G81724">
    <property type="entry name" value="G81724"/>
</dbReference>
<dbReference type="RefSeq" id="WP_010229916.1">
    <property type="nucleotide sequence ID" value="NZ_CP063055.1"/>
</dbReference>
<dbReference type="SMR" id="Q9PL68"/>
<dbReference type="GeneID" id="1246409"/>
<dbReference type="KEGG" id="cmu:TC_0240"/>
<dbReference type="eggNOG" id="COG0024">
    <property type="taxonomic scope" value="Bacteria"/>
</dbReference>
<dbReference type="HOGENOM" id="CLU_015857_0_0_0"/>
<dbReference type="OrthoDB" id="9802055at2"/>
<dbReference type="Proteomes" id="UP000000800">
    <property type="component" value="Chromosome"/>
</dbReference>
<dbReference type="GO" id="GO:0005829">
    <property type="term" value="C:cytosol"/>
    <property type="evidence" value="ECO:0007669"/>
    <property type="project" value="TreeGrafter"/>
</dbReference>
<dbReference type="GO" id="GO:0004239">
    <property type="term" value="F:initiator methionyl aminopeptidase activity"/>
    <property type="evidence" value="ECO:0007669"/>
    <property type="project" value="UniProtKB-UniRule"/>
</dbReference>
<dbReference type="GO" id="GO:0046872">
    <property type="term" value="F:metal ion binding"/>
    <property type="evidence" value="ECO:0007669"/>
    <property type="project" value="UniProtKB-UniRule"/>
</dbReference>
<dbReference type="GO" id="GO:0070006">
    <property type="term" value="F:metalloaminopeptidase activity"/>
    <property type="evidence" value="ECO:0007669"/>
    <property type="project" value="UniProtKB-UniRule"/>
</dbReference>
<dbReference type="GO" id="GO:0006508">
    <property type="term" value="P:proteolysis"/>
    <property type="evidence" value="ECO:0007669"/>
    <property type="project" value="UniProtKB-KW"/>
</dbReference>
<dbReference type="CDD" id="cd01086">
    <property type="entry name" value="MetAP1"/>
    <property type="match status" value="1"/>
</dbReference>
<dbReference type="Gene3D" id="3.10.450.50">
    <property type="match status" value="1"/>
</dbReference>
<dbReference type="Gene3D" id="3.90.230.10">
    <property type="entry name" value="Creatinase/methionine aminopeptidase superfamily"/>
    <property type="match status" value="1"/>
</dbReference>
<dbReference type="HAMAP" id="MF_01974">
    <property type="entry name" value="MetAP_1"/>
    <property type="match status" value="1"/>
</dbReference>
<dbReference type="InterPro" id="IPR036005">
    <property type="entry name" value="Creatinase/aminopeptidase-like"/>
</dbReference>
<dbReference type="InterPro" id="IPR000994">
    <property type="entry name" value="Pept_M24"/>
</dbReference>
<dbReference type="InterPro" id="IPR001714">
    <property type="entry name" value="Pept_M24_MAP"/>
</dbReference>
<dbReference type="InterPro" id="IPR002467">
    <property type="entry name" value="Pept_M24A_MAP1"/>
</dbReference>
<dbReference type="InterPro" id="IPR004027">
    <property type="entry name" value="SEC_C_motif"/>
</dbReference>
<dbReference type="NCBIfam" id="TIGR00500">
    <property type="entry name" value="met_pdase_I"/>
    <property type="match status" value="1"/>
</dbReference>
<dbReference type="NCBIfam" id="NF008970">
    <property type="entry name" value="PRK12318.1"/>
    <property type="match status" value="1"/>
</dbReference>
<dbReference type="PANTHER" id="PTHR43330">
    <property type="entry name" value="METHIONINE AMINOPEPTIDASE"/>
    <property type="match status" value="1"/>
</dbReference>
<dbReference type="PANTHER" id="PTHR43330:SF27">
    <property type="entry name" value="METHIONINE AMINOPEPTIDASE"/>
    <property type="match status" value="1"/>
</dbReference>
<dbReference type="Pfam" id="PF00557">
    <property type="entry name" value="Peptidase_M24"/>
    <property type="match status" value="1"/>
</dbReference>
<dbReference type="Pfam" id="PF02810">
    <property type="entry name" value="SEC-C"/>
    <property type="match status" value="1"/>
</dbReference>
<dbReference type="PRINTS" id="PR00599">
    <property type="entry name" value="MAPEPTIDASE"/>
</dbReference>
<dbReference type="SUPFAM" id="SSF55920">
    <property type="entry name" value="Creatinase/aminopeptidase"/>
    <property type="match status" value="1"/>
</dbReference>
<dbReference type="SUPFAM" id="SSF103642">
    <property type="entry name" value="Sec-C motif"/>
    <property type="match status" value="1"/>
</dbReference>
<dbReference type="PROSITE" id="PS00680">
    <property type="entry name" value="MAP_1"/>
    <property type="match status" value="1"/>
</dbReference>
<accession>Q9PL68</accession>
<protein>
    <recommendedName>
        <fullName evidence="1">Methionine aminopeptidase</fullName>
        <shortName evidence="1">MAP</shortName>
        <shortName evidence="1">MetAP</shortName>
        <ecNumber evidence="1">3.4.11.18</ecNumber>
    </recommendedName>
    <alternativeName>
        <fullName evidence="1">Peptidase M</fullName>
    </alternativeName>
</protein>
<name>MAP1_CHLMU</name>
<organism>
    <name type="scientific">Chlamydia muridarum (strain MoPn / Nigg)</name>
    <dbReference type="NCBI Taxonomy" id="243161"/>
    <lineage>
        <taxon>Bacteria</taxon>
        <taxon>Pseudomonadati</taxon>
        <taxon>Chlamydiota</taxon>
        <taxon>Chlamydiia</taxon>
        <taxon>Chlamydiales</taxon>
        <taxon>Chlamydiaceae</taxon>
        <taxon>Chlamydia/Chlamydophila group</taxon>
        <taxon>Chlamydia</taxon>
    </lineage>
</organism>
<reference key="1">
    <citation type="journal article" date="2000" name="Nucleic Acids Res.">
        <title>Genome sequences of Chlamydia trachomatis MoPn and Chlamydia pneumoniae AR39.</title>
        <authorList>
            <person name="Read T.D."/>
            <person name="Brunham R.C."/>
            <person name="Shen C."/>
            <person name="Gill S.R."/>
            <person name="Heidelberg J.F."/>
            <person name="White O."/>
            <person name="Hickey E.K."/>
            <person name="Peterson J.D."/>
            <person name="Utterback T.R."/>
            <person name="Berry K.J."/>
            <person name="Bass S."/>
            <person name="Linher K.D."/>
            <person name="Weidman J.F."/>
            <person name="Khouri H.M."/>
            <person name="Craven B."/>
            <person name="Bowman C."/>
            <person name="Dodson R.J."/>
            <person name="Gwinn M.L."/>
            <person name="Nelson W.C."/>
            <person name="DeBoy R.T."/>
            <person name="Kolonay J.F."/>
            <person name="McClarty G."/>
            <person name="Salzberg S.L."/>
            <person name="Eisen J.A."/>
            <person name="Fraser C.M."/>
        </authorList>
    </citation>
    <scope>NUCLEOTIDE SEQUENCE [LARGE SCALE GENOMIC DNA]</scope>
    <source>
        <strain>MoPn / Nigg</strain>
    </source>
</reference>
<keyword id="KW-0031">Aminopeptidase</keyword>
<keyword id="KW-0378">Hydrolase</keyword>
<keyword id="KW-0479">Metal-binding</keyword>
<keyword id="KW-0645">Protease</keyword>